<keyword id="KW-0963">Cytoplasm</keyword>
<keyword id="KW-0227">DNA damage</keyword>
<keyword id="KW-0233">DNA recombination</keyword>
<keyword id="KW-0234">DNA repair</keyword>
<keyword id="KW-0238">DNA-binding</keyword>
<keyword id="KW-0255">Endonuclease</keyword>
<keyword id="KW-0378">Hydrolase</keyword>
<keyword id="KW-0460">Magnesium</keyword>
<keyword id="KW-0479">Metal-binding</keyword>
<keyword id="KW-0540">Nuclease</keyword>
<keyword id="KW-1185">Reference proteome</keyword>
<organism>
    <name type="scientific">Ralstonia nicotianae (strain ATCC BAA-1114 / GMI1000)</name>
    <name type="common">Ralstonia solanacearum</name>
    <dbReference type="NCBI Taxonomy" id="267608"/>
    <lineage>
        <taxon>Bacteria</taxon>
        <taxon>Pseudomonadati</taxon>
        <taxon>Pseudomonadota</taxon>
        <taxon>Betaproteobacteria</taxon>
        <taxon>Burkholderiales</taxon>
        <taxon>Burkholderiaceae</taxon>
        <taxon>Ralstonia</taxon>
        <taxon>Ralstonia solanacearum species complex</taxon>
    </lineage>
</organism>
<accession>Q8Y233</accession>
<evidence type="ECO:0000255" key="1">
    <source>
        <dbReference type="HAMAP-Rule" id="MF_00034"/>
    </source>
</evidence>
<dbReference type="EC" id="3.1.21.10" evidence="1"/>
<dbReference type="EMBL" id="AL646052">
    <property type="protein sequence ID" value="CAD14031.1"/>
    <property type="molecule type" value="Genomic_DNA"/>
</dbReference>
<dbReference type="RefSeq" id="WP_011000462.1">
    <property type="nucleotide sequence ID" value="NC_003295.1"/>
</dbReference>
<dbReference type="SMR" id="Q8Y233"/>
<dbReference type="STRING" id="267608.RSc0503"/>
<dbReference type="EnsemblBacteria" id="CAD14031">
    <property type="protein sequence ID" value="CAD14031"/>
    <property type="gene ID" value="RSc0503"/>
</dbReference>
<dbReference type="KEGG" id="rso:RSc0503"/>
<dbReference type="eggNOG" id="COG0817">
    <property type="taxonomic scope" value="Bacteria"/>
</dbReference>
<dbReference type="HOGENOM" id="CLU_091257_3_1_4"/>
<dbReference type="Proteomes" id="UP000001436">
    <property type="component" value="Chromosome"/>
</dbReference>
<dbReference type="GO" id="GO:0005737">
    <property type="term" value="C:cytoplasm"/>
    <property type="evidence" value="ECO:0007669"/>
    <property type="project" value="UniProtKB-SubCell"/>
</dbReference>
<dbReference type="GO" id="GO:0048476">
    <property type="term" value="C:Holliday junction resolvase complex"/>
    <property type="evidence" value="ECO:0007669"/>
    <property type="project" value="UniProtKB-UniRule"/>
</dbReference>
<dbReference type="GO" id="GO:0008821">
    <property type="term" value="F:crossover junction DNA endonuclease activity"/>
    <property type="evidence" value="ECO:0007669"/>
    <property type="project" value="UniProtKB-UniRule"/>
</dbReference>
<dbReference type="GO" id="GO:0003677">
    <property type="term" value="F:DNA binding"/>
    <property type="evidence" value="ECO:0007669"/>
    <property type="project" value="UniProtKB-KW"/>
</dbReference>
<dbReference type="GO" id="GO:0000287">
    <property type="term" value="F:magnesium ion binding"/>
    <property type="evidence" value="ECO:0007669"/>
    <property type="project" value="UniProtKB-UniRule"/>
</dbReference>
<dbReference type="GO" id="GO:0006310">
    <property type="term" value="P:DNA recombination"/>
    <property type="evidence" value="ECO:0007669"/>
    <property type="project" value="UniProtKB-UniRule"/>
</dbReference>
<dbReference type="GO" id="GO:0006281">
    <property type="term" value="P:DNA repair"/>
    <property type="evidence" value="ECO:0007669"/>
    <property type="project" value="UniProtKB-UniRule"/>
</dbReference>
<dbReference type="CDD" id="cd16962">
    <property type="entry name" value="RuvC"/>
    <property type="match status" value="1"/>
</dbReference>
<dbReference type="FunFam" id="3.30.420.10:FF:000002">
    <property type="entry name" value="Crossover junction endodeoxyribonuclease RuvC"/>
    <property type="match status" value="1"/>
</dbReference>
<dbReference type="Gene3D" id="3.30.420.10">
    <property type="entry name" value="Ribonuclease H-like superfamily/Ribonuclease H"/>
    <property type="match status" value="1"/>
</dbReference>
<dbReference type="HAMAP" id="MF_00034">
    <property type="entry name" value="RuvC"/>
    <property type="match status" value="1"/>
</dbReference>
<dbReference type="InterPro" id="IPR012337">
    <property type="entry name" value="RNaseH-like_sf"/>
</dbReference>
<dbReference type="InterPro" id="IPR036397">
    <property type="entry name" value="RNaseH_sf"/>
</dbReference>
<dbReference type="InterPro" id="IPR020563">
    <property type="entry name" value="X-over_junc_endoDNase_Mg_BS"/>
</dbReference>
<dbReference type="InterPro" id="IPR002176">
    <property type="entry name" value="X-over_junc_endoDNase_RuvC"/>
</dbReference>
<dbReference type="NCBIfam" id="TIGR00228">
    <property type="entry name" value="ruvC"/>
    <property type="match status" value="1"/>
</dbReference>
<dbReference type="PANTHER" id="PTHR30194">
    <property type="entry name" value="CROSSOVER JUNCTION ENDODEOXYRIBONUCLEASE RUVC"/>
    <property type="match status" value="1"/>
</dbReference>
<dbReference type="PANTHER" id="PTHR30194:SF3">
    <property type="entry name" value="CROSSOVER JUNCTION ENDODEOXYRIBONUCLEASE RUVC"/>
    <property type="match status" value="1"/>
</dbReference>
<dbReference type="Pfam" id="PF02075">
    <property type="entry name" value="RuvC"/>
    <property type="match status" value="1"/>
</dbReference>
<dbReference type="PRINTS" id="PR00696">
    <property type="entry name" value="RSOLVASERUVC"/>
</dbReference>
<dbReference type="SUPFAM" id="SSF53098">
    <property type="entry name" value="Ribonuclease H-like"/>
    <property type="match status" value="1"/>
</dbReference>
<dbReference type="PROSITE" id="PS01321">
    <property type="entry name" value="RUVC"/>
    <property type="match status" value="1"/>
</dbReference>
<comment type="function">
    <text evidence="1">The RuvA-RuvB-RuvC complex processes Holliday junction (HJ) DNA during genetic recombination and DNA repair. Endonuclease that resolves HJ intermediates. Cleaves cruciform DNA by making single-stranded nicks across the HJ at symmetrical positions within the homologous arms, yielding a 5'-phosphate and a 3'-hydroxyl group; requires a central core of homology in the junction. The consensus cleavage sequence is 5'-(A/T)TT(C/G)-3'. Cleavage occurs on the 3'-side of the TT dinucleotide at the point of strand exchange. HJ branch migration catalyzed by RuvA-RuvB allows RuvC to scan DNA until it finds its consensus sequence, where it cleaves and resolves the cruciform DNA.</text>
</comment>
<comment type="catalytic activity">
    <reaction evidence="1">
        <text>Endonucleolytic cleavage at a junction such as a reciprocal single-stranded crossover between two homologous DNA duplexes (Holliday junction).</text>
        <dbReference type="EC" id="3.1.21.10"/>
    </reaction>
</comment>
<comment type="cofactor">
    <cofactor evidence="1">
        <name>Mg(2+)</name>
        <dbReference type="ChEBI" id="CHEBI:18420"/>
    </cofactor>
    <text evidence="1">Binds 2 Mg(2+) ion per subunit.</text>
</comment>
<comment type="subunit">
    <text evidence="1">Homodimer which binds Holliday junction (HJ) DNA. The HJ becomes 2-fold symmetrical on binding to RuvC with unstacked arms; it has a different conformation from HJ DNA in complex with RuvA. In the full resolvosome a probable DNA-RuvA(4)-RuvB(12)-RuvC(2) complex forms which resolves the HJ.</text>
</comment>
<comment type="subcellular location">
    <subcellularLocation>
        <location evidence="1">Cytoplasm</location>
    </subcellularLocation>
</comment>
<comment type="similarity">
    <text evidence="1">Belongs to the RuvC family.</text>
</comment>
<name>RUVC_RALN1</name>
<gene>
    <name evidence="1" type="primary">ruvC</name>
    <name type="ordered locus">RSc0503</name>
    <name type="ORF">RS05019</name>
</gene>
<sequence length="181" mass="19260">MRILGIDPGLRTTGFGVLERHGHQLVYVASGTIKSDGNADLPSRLKTLYDGVSELVRTYRPDCASIEKVFVNVNPQSTLLLGQARGAVICGLMSGNLPVFEYTALQLKQAVVGYGRANKDQVQDMVVRLLNLEGRPGTDAADALGVAICHAHGGETLAAMAGLAPQLARKGLRVRRGRLVG</sequence>
<protein>
    <recommendedName>
        <fullName evidence="1">Crossover junction endodeoxyribonuclease RuvC</fullName>
        <ecNumber evidence="1">3.1.21.10</ecNumber>
    </recommendedName>
    <alternativeName>
        <fullName evidence="1">Holliday junction nuclease RuvC</fullName>
    </alternativeName>
    <alternativeName>
        <fullName evidence="1">Holliday junction resolvase RuvC</fullName>
    </alternativeName>
</protein>
<proteinExistence type="inferred from homology"/>
<reference key="1">
    <citation type="journal article" date="2002" name="Nature">
        <title>Genome sequence of the plant pathogen Ralstonia solanacearum.</title>
        <authorList>
            <person name="Salanoubat M."/>
            <person name="Genin S."/>
            <person name="Artiguenave F."/>
            <person name="Gouzy J."/>
            <person name="Mangenot S."/>
            <person name="Arlat M."/>
            <person name="Billault A."/>
            <person name="Brottier P."/>
            <person name="Camus J.-C."/>
            <person name="Cattolico L."/>
            <person name="Chandler M."/>
            <person name="Choisne N."/>
            <person name="Claudel-Renard C."/>
            <person name="Cunnac S."/>
            <person name="Demange N."/>
            <person name="Gaspin C."/>
            <person name="Lavie M."/>
            <person name="Moisan A."/>
            <person name="Robert C."/>
            <person name="Saurin W."/>
            <person name="Schiex T."/>
            <person name="Siguier P."/>
            <person name="Thebault P."/>
            <person name="Whalen M."/>
            <person name="Wincker P."/>
            <person name="Levy M."/>
            <person name="Weissenbach J."/>
            <person name="Boucher C.A."/>
        </authorList>
    </citation>
    <scope>NUCLEOTIDE SEQUENCE [LARGE SCALE GENOMIC DNA]</scope>
    <source>
        <strain>ATCC BAA-1114 / GMI1000</strain>
    </source>
</reference>
<feature type="chain" id="PRO_0000183124" description="Crossover junction endodeoxyribonuclease RuvC">
    <location>
        <begin position="1"/>
        <end position="181"/>
    </location>
</feature>
<feature type="active site" evidence="1">
    <location>
        <position position="7"/>
    </location>
</feature>
<feature type="active site" evidence="1">
    <location>
        <position position="67"/>
    </location>
</feature>
<feature type="active site" evidence="1">
    <location>
        <position position="139"/>
    </location>
</feature>
<feature type="binding site" evidence="1">
    <location>
        <position position="7"/>
    </location>
    <ligand>
        <name>Mg(2+)</name>
        <dbReference type="ChEBI" id="CHEBI:18420"/>
        <label>1</label>
    </ligand>
</feature>
<feature type="binding site" evidence="1">
    <location>
        <position position="67"/>
    </location>
    <ligand>
        <name>Mg(2+)</name>
        <dbReference type="ChEBI" id="CHEBI:18420"/>
        <label>2</label>
    </ligand>
</feature>
<feature type="binding site" evidence="1">
    <location>
        <position position="139"/>
    </location>
    <ligand>
        <name>Mg(2+)</name>
        <dbReference type="ChEBI" id="CHEBI:18420"/>
        <label>1</label>
    </ligand>
</feature>